<keyword id="KW-0143">Chaperone</keyword>
<keyword id="KW-0963">Cytoplasm</keyword>
<keyword id="KW-0653">Protein transport</keyword>
<keyword id="KW-0811">Translocation</keyword>
<keyword id="KW-0813">Transport</keyword>
<comment type="function">
    <text evidence="1">One of the proteins required for the normal export of preproteins out of the cell cytoplasm. It is a molecular chaperone that binds to a subset of precursor proteins, maintaining them in a translocation-competent state. It also specifically binds to its receptor SecA.</text>
</comment>
<comment type="subunit">
    <text evidence="1">Homotetramer, a dimer of dimers. One homotetramer interacts with 1 SecA dimer.</text>
</comment>
<comment type="subcellular location">
    <subcellularLocation>
        <location evidence="1">Cytoplasm</location>
    </subcellularLocation>
</comment>
<comment type="similarity">
    <text evidence="1">Belongs to the SecB family.</text>
</comment>
<accession>B0UUY0</accession>
<sequence length="171" mass="19488">MTEKNQDAVTEEQGTEVVLQIQRIYVKDVSFEAPNLPHIFQQEWKPKLDFNLSTETTHLAEDLYEVCLNISVETTMEGSEDVAFICEVKQAGIFAISGLEDVQLAHCLTSQCPNMLFPYARELISSLVNRGTFPALNLAPVNFDALFVEYMQRQQAQEESKTEEKEKKEVH</sequence>
<reference key="1">
    <citation type="submission" date="2008-02" db="EMBL/GenBank/DDBJ databases">
        <title>Complete sequence of Haemophilus somnus 2336.</title>
        <authorList>
            <consortium name="US DOE Joint Genome Institute"/>
            <person name="Siddaramappa S."/>
            <person name="Duncan A.J."/>
            <person name="Challacombe J.F."/>
            <person name="Rainey D."/>
            <person name="Gillaspy A.F."/>
            <person name="Carson M."/>
            <person name="Gipson J."/>
            <person name="Gipson M."/>
            <person name="Bruce D."/>
            <person name="Detter J.C."/>
            <person name="Han C.S."/>
            <person name="Land M."/>
            <person name="Tapia R."/>
            <person name="Thompson L.S."/>
            <person name="Orvis J."/>
            <person name="Zaitshik J."/>
            <person name="Barnes G."/>
            <person name="Brettin T.S."/>
            <person name="Dyer D.W."/>
            <person name="Inzana T.J."/>
        </authorList>
    </citation>
    <scope>NUCLEOTIDE SEQUENCE [LARGE SCALE GENOMIC DNA]</scope>
    <source>
        <strain>2336</strain>
    </source>
</reference>
<name>SECB_HISS2</name>
<evidence type="ECO:0000255" key="1">
    <source>
        <dbReference type="HAMAP-Rule" id="MF_00821"/>
    </source>
</evidence>
<proteinExistence type="inferred from homology"/>
<organism>
    <name type="scientific">Histophilus somni (strain 2336)</name>
    <name type="common">Haemophilus somnus</name>
    <dbReference type="NCBI Taxonomy" id="228400"/>
    <lineage>
        <taxon>Bacteria</taxon>
        <taxon>Pseudomonadati</taxon>
        <taxon>Pseudomonadota</taxon>
        <taxon>Gammaproteobacteria</taxon>
        <taxon>Pasteurellales</taxon>
        <taxon>Pasteurellaceae</taxon>
        <taxon>Histophilus</taxon>
    </lineage>
</organism>
<protein>
    <recommendedName>
        <fullName evidence="1">Protein-export protein SecB</fullName>
    </recommendedName>
</protein>
<dbReference type="EMBL" id="CP000947">
    <property type="protein sequence ID" value="ACA31843.1"/>
    <property type="molecule type" value="Genomic_DNA"/>
</dbReference>
<dbReference type="RefSeq" id="WP_012341089.1">
    <property type="nucleotide sequence ID" value="NC_010519.1"/>
</dbReference>
<dbReference type="SMR" id="B0UUY0"/>
<dbReference type="STRING" id="228400.HSM_0022"/>
<dbReference type="GeneID" id="31486297"/>
<dbReference type="KEGG" id="hsm:HSM_0022"/>
<dbReference type="HOGENOM" id="CLU_111574_1_0_6"/>
<dbReference type="GO" id="GO:0005737">
    <property type="term" value="C:cytoplasm"/>
    <property type="evidence" value="ECO:0007669"/>
    <property type="project" value="UniProtKB-SubCell"/>
</dbReference>
<dbReference type="GO" id="GO:0051082">
    <property type="term" value="F:unfolded protein binding"/>
    <property type="evidence" value="ECO:0007669"/>
    <property type="project" value="InterPro"/>
</dbReference>
<dbReference type="GO" id="GO:0006457">
    <property type="term" value="P:protein folding"/>
    <property type="evidence" value="ECO:0007669"/>
    <property type="project" value="UniProtKB-UniRule"/>
</dbReference>
<dbReference type="GO" id="GO:0051262">
    <property type="term" value="P:protein tetramerization"/>
    <property type="evidence" value="ECO:0007669"/>
    <property type="project" value="InterPro"/>
</dbReference>
<dbReference type="GO" id="GO:0015031">
    <property type="term" value="P:protein transport"/>
    <property type="evidence" value="ECO:0007669"/>
    <property type="project" value="UniProtKB-UniRule"/>
</dbReference>
<dbReference type="CDD" id="cd00557">
    <property type="entry name" value="Translocase_SecB"/>
    <property type="match status" value="1"/>
</dbReference>
<dbReference type="Gene3D" id="3.10.420.10">
    <property type="entry name" value="SecB-like"/>
    <property type="match status" value="1"/>
</dbReference>
<dbReference type="HAMAP" id="MF_00821">
    <property type="entry name" value="SecB"/>
    <property type="match status" value="1"/>
</dbReference>
<dbReference type="InterPro" id="IPR003708">
    <property type="entry name" value="SecB"/>
</dbReference>
<dbReference type="InterPro" id="IPR035958">
    <property type="entry name" value="SecB-like_sf"/>
</dbReference>
<dbReference type="NCBIfam" id="NF004393">
    <property type="entry name" value="PRK05751.1-4"/>
    <property type="match status" value="1"/>
</dbReference>
<dbReference type="NCBIfam" id="TIGR00809">
    <property type="entry name" value="secB"/>
    <property type="match status" value="1"/>
</dbReference>
<dbReference type="PANTHER" id="PTHR36918">
    <property type="match status" value="1"/>
</dbReference>
<dbReference type="PANTHER" id="PTHR36918:SF1">
    <property type="entry name" value="PROTEIN-EXPORT PROTEIN SECB"/>
    <property type="match status" value="1"/>
</dbReference>
<dbReference type="Pfam" id="PF02556">
    <property type="entry name" value="SecB"/>
    <property type="match status" value="1"/>
</dbReference>
<dbReference type="PRINTS" id="PR01594">
    <property type="entry name" value="SECBCHAPRONE"/>
</dbReference>
<dbReference type="SUPFAM" id="SSF54611">
    <property type="entry name" value="SecB-like"/>
    <property type="match status" value="1"/>
</dbReference>
<feature type="chain" id="PRO_1000083859" description="Protein-export protein SecB">
    <location>
        <begin position="1"/>
        <end position="171"/>
    </location>
</feature>
<gene>
    <name evidence="1" type="primary">secB</name>
    <name type="ordered locus">HSM_0022</name>
</gene>